<gene>
    <name type="ordered locus">At1g23950</name>
    <name type="ORF">T23E23.13</name>
</gene>
<sequence length="373" mass="41825">MTTEANSTAEEGYSVQRDFWRQAAKSDGFDLENISLPPGTNGIVMGLIPYDCQRARHYPFPVLVKLYAKFGLHRYNMLKGTSFQLATLMKFNMLPNYISSFYMTLLAHDPDPAAGSSQKTFQVRVDEQQFGSLDINCSIARPKHEGDLLEVSTETPFMPHFHGGALGDGIFKVELPDCLSDTALNELAGAVLRGELPEHVFDDALYARAGGIFQGELPDWPSDDVLNDGKRFYMVKESEWQATDWISMYLELVITTTDKSISIKPEVLSKLEIVKVAIETATKDEEPSNERLKAYRAHVYITFKGLAEPRAHERVFEIGEHVERQAIVRRVMGHRGDLTLKGKLCGGQYIKKRSLALKSGKKSQKCKKQALVG</sequence>
<evidence type="ECO:0000303" key="1">
    <source>
    </source>
</evidence>
<evidence type="ECO:0000303" key="2">
    <source>
    </source>
</evidence>
<evidence type="ECO:0000305" key="3"/>
<evidence type="ECO:0007744" key="4">
    <source>
    </source>
</evidence>
<dbReference type="EMBL" id="AC002423">
    <property type="protein sequence ID" value="AAF87155.1"/>
    <property type="molecule type" value="Genomic_DNA"/>
</dbReference>
<dbReference type="EMBL" id="CP002684">
    <property type="protein sequence ID" value="AEE30453.1"/>
    <property type="molecule type" value="Genomic_DNA"/>
</dbReference>
<dbReference type="EMBL" id="CP002684">
    <property type="protein sequence ID" value="AEE30454.1"/>
    <property type="molecule type" value="Genomic_DNA"/>
</dbReference>
<dbReference type="EMBL" id="CP002684">
    <property type="protein sequence ID" value="AEE30455.1"/>
    <property type="molecule type" value="Genomic_DNA"/>
</dbReference>
<dbReference type="EMBL" id="CP002684">
    <property type="protein sequence ID" value="AEE30456.1"/>
    <property type="molecule type" value="Genomic_DNA"/>
</dbReference>
<dbReference type="EMBL" id="CP002684">
    <property type="protein sequence ID" value="AEE30457.1"/>
    <property type="molecule type" value="Genomic_DNA"/>
</dbReference>
<dbReference type="EMBL" id="AF370288">
    <property type="protein sequence ID" value="AAK44103.1"/>
    <property type="molecule type" value="mRNA"/>
</dbReference>
<dbReference type="EMBL" id="AY063057">
    <property type="protein sequence ID" value="AAL34231.1"/>
    <property type="molecule type" value="mRNA"/>
</dbReference>
<dbReference type="EMBL" id="BX813888">
    <property type="status" value="NOT_ANNOTATED_CDS"/>
    <property type="molecule type" value="mRNA"/>
</dbReference>
<dbReference type="EMBL" id="BX815042">
    <property type="status" value="NOT_ANNOTATED_CDS"/>
    <property type="molecule type" value="mRNA"/>
</dbReference>
<dbReference type="EMBL" id="BX816706">
    <property type="status" value="NOT_ANNOTATED_CDS"/>
    <property type="molecule type" value="mRNA"/>
</dbReference>
<dbReference type="RefSeq" id="NP_001031085.2">
    <molecule id="Q9LR97-5"/>
    <property type="nucleotide sequence ID" value="NM_001036008.2"/>
</dbReference>
<dbReference type="RefSeq" id="NP_001077591.1">
    <molecule id="Q9LR97-3"/>
    <property type="nucleotide sequence ID" value="NM_001084122.1"/>
</dbReference>
<dbReference type="RefSeq" id="NP_564210.2">
    <molecule id="Q9LR97-4"/>
    <property type="nucleotide sequence ID" value="NM_102242.3"/>
</dbReference>
<dbReference type="RefSeq" id="NP_973904.1">
    <molecule id="Q9LR97-1"/>
    <property type="nucleotide sequence ID" value="NM_202175.3"/>
</dbReference>
<dbReference type="RefSeq" id="NP_973905.1">
    <molecule id="Q9LR97-2"/>
    <property type="nucleotide sequence ID" value="NM_202176.2"/>
</dbReference>
<dbReference type="SMR" id="Q9LR97"/>
<dbReference type="FunCoup" id="Q9LR97">
    <property type="interactions" value="45"/>
</dbReference>
<dbReference type="STRING" id="3702.Q9LR97"/>
<dbReference type="iPTMnet" id="Q9LR97"/>
<dbReference type="PaxDb" id="3702-AT1G23950.2"/>
<dbReference type="ProteomicsDB" id="243183">
    <molecule id="Q9LR97-1"/>
</dbReference>
<dbReference type="EnsemblPlants" id="AT1G23950.1">
    <molecule id="Q9LR97-4"/>
    <property type="protein sequence ID" value="AT1G23950.1"/>
    <property type="gene ID" value="AT1G23950"/>
</dbReference>
<dbReference type="EnsemblPlants" id="AT1G23950.2">
    <molecule id="Q9LR97-1"/>
    <property type="protein sequence ID" value="AT1G23950.2"/>
    <property type="gene ID" value="AT1G23950"/>
</dbReference>
<dbReference type="EnsemblPlants" id="AT1G23950.3">
    <molecule id="Q9LR97-2"/>
    <property type="protein sequence ID" value="AT1G23950.3"/>
    <property type="gene ID" value="AT1G23950"/>
</dbReference>
<dbReference type="EnsemblPlants" id="AT1G23950.4">
    <molecule id="Q9LR97-5"/>
    <property type="protein sequence ID" value="AT1G23950.4"/>
    <property type="gene ID" value="AT1G23950"/>
</dbReference>
<dbReference type="EnsemblPlants" id="AT1G23950.5">
    <molecule id="Q9LR97-3"/>
    <property type="protein sequence ID" value="AT1G23950.5"/>
    <property type="gene ID" value="AT1G23950"/>
</dbReference>
<dbReference type="GeneID" id="839006"/>
<dbReference type="Gramene" id="AT1G23950.1">
    <molecule id="Q9LR97-4"/>
    <property type="protein sequence ID" value="AT1G23950.1"/>
    <property type="gene ID" value="AT1G23950"/>
</dbReference>
<dbReference type="Gramene" id="AT1G23950.2">
    <molecule id="Q9LR97-1"/>
    <property type="protein sequence ID" value="AT1G23950.2"/>
    <property type="gene ID" value="AT1G23950"/>
</dbReference>
<dbReference type="Gramene" id="AT1G23950.3">
    <molecule id="Q9LR97-2"/>
    <property type="protein sequence ID" value="AT1G23950.3"/>
    <property type="gene ID" value="AT1G23950"/>
</dbReference>
<dbReference type="Gramene" id="AT1G23950.4">
    <molecule id="Q9LR97-5"/>
    <property type="protein sequence ID" value="AT1G23950.4"/>
    <property type="gene ID" value="AT1G23950"/>
</dbReference>
<dbReference type="Gramene" id="AT1G23950.5">
    <molecule id="Q9LR97-3"/>
    <property type="protein sequence ID" value="AT1G23950.5"/>
    <property type="gene ID" value="AT1G23950"/>
</dbReference>
<dbReference type="KEGG" id="ath:AT1G23950"/>
<dbReference type="Araport" id="AT1G23950"/>
<dbReference type="TAIR" id="AT1G23950"/>
<dbReference type="InParanoid" id="Q9LR97"/>
<dbReference type="OMA" id="EQNANCL"/>
<dbReference type="PhylomeDB" id="Q9LR97"/>
<dbReference type="PRO" id="PR:Q9LR97"/>
<dbReference type="Proteomes" id="UP000006548">
    <property type="component" value="Chromosome 1"/>
</dbReference>
<dbReference type="ExpressionAtlas" id="Q9LR97">
    <property type="expression patterns" value="baseline and differential"/>
</dbReference>
<dbReference type="InterPro" id="IPR006462">
    <property type="entry name" value="MS5"/>
</dbReference>
<dbReference type="NCBIfam" id="TIGR01572">
    <property type="entry name" value="A_thl_para_3677"/>
    <property type="match status" value="2"/>
</dbReference>
<dbReference type="PANTHER" id="PTHR31260:SF77">
    <property type="entry name" value="(RAPE) HYPOTHETICAL PROTEIN"/>
    <property type="match status" value="1"/>
</dbReference>
<dbReference type="PANTHER" id="PTHR31260">
    <property type="entry name" value="CYSTATIN/MONELLIN SUPERFAMILY PROTEIN"/>
    <property type="match status" value="1"/>
</dbReference>
<dbReference type="Pfam" id="PF04776">
    <property type="entry name" value="protein_MS5"/>
    <property type="match status" value="1"/>
</dbReference>
<organism>
    <name type="scientific">Arabidopsis thaliana</name>
    <name type="common">Mouse-ear cress</name>
    <dbReference type="NCBI Taxonomy" id="3702"/>
    <lineage>
        <taxon>Eukaryota</taxon>
        <taxon>Viridiplantae</taxon>
        <taxon>Streptophyta</taxon>
        <taxon>Embryophyta</taxon>
        <taxon>Tracheophyta</taxon>
        <taxon>Spermatophyta</taxon>
        <taxon>Magnoliopsida</taxon>
        <taxon>eudicotyledons</taxon>
        <taxon>Gunneridae</taxon>
        <taxon>Pentapetalae</taxon>
        <taxon>rosids</taxon>
        <taxon>malvids</taxon>
        <taxon>Brassicales</taxon>
        <taxon>Brassicaceae</taxon>
        <taxon>Camelineae</taxon>
        <taxon>Arabidopsis</taxon>
    </lineage>
</organism>
<keyword id="KW-0007">Acetylation</keyword>
<keyword id="KW-0025">Alternative splicing</keyword>
<keyword id="KW-1185">Reference proteome</keyword>
<name>Y1239_ARATH</name>
<proteinExistence type="evidence at protein level"/>
<protein>
    <recommendedName>
        <fullName>UPF0725 protein At1g23950</fullName>
    </recommendedName>
</protein>
<accession>Q9LR97</accession>
<accession>B3H657</accession>
<accession>Q2V4L6</accession>
<accession>Q3E7C4</accession>
<accession>Q94K54</accession>
<feature type="initiator methionine" description="Removed" evidence="4">
    <location>
        <position position="1"/>
    </location>
</feature>
<feature type="chain" id="PRO_0000363130" description="UPF0725 protein At1g23950">
    <location>
        <begin position="2"/>
        <end position="373"/>
    </location>
</feature>
<feature type="modified residue" description="N-acetylthreonine" evidence="4">
    <location>
        <position position="2"/>
    </location>
</feature>
<feature type="splice variant" id="VSP_036248" description="In isoform 2." evidence="2">
    <location>
        <begin position="146"/>
        <end position="150"/>
    </location>
</feature>
<feature type="splice variant" id="VSP_036249" description="In isoform 3." evidence="3">
    <location>
        <begin position="151"/>
        <end position="180"/>
    </location>
</feature>
<feature type="splice variant" id="VSP_036250" description="In isoform 5." evidence="3">
    <original>KESEWQATDWISMYLEL</original>
    <variation>RNQSGKPLIGFLCIWNL</variation>
    <location>
        <begin position="236"/>
        <end position="252"/>
    </location>
</feature>
<feature type="splice variant" id="VSP_036251" description="In isoform 5." evidence="3">
    <location>
        <begin position="253"/>
        <end position="373"/>
    </location>
</feature>
<feature type="splice variant" id="VSP_036252" description="In isoform 4." evidence="1">
    <original>KPEVLSKLEI</original>
    <variation>VSFTYIYIN</variation>
    <location>
        <begin position="264"/>
        <end position="273"/>
    </location>
</feature>
<feature type="splice variant" id="VSP_036253" description="In isoform 4." evidence="1">
    <location>
        <begin position="274"/>
        <end position="373"/>
    </location>
</feature>
<comment type="alternative products">
    <event type="alternative splicing"/>
    <isoform>
        <id>Q9LR97-1</id>
        <name>1</name>
        <sequence type="displayed"/>
    </isoform>
    <isoform>
        <id>Q9LR97-2</id>
        <name>2</name>
        <sequence type="described" ref="VSP_036248"/>
    </isoform>
    <isoform>
        <id>Q9LR97-3</id>
        <name>3</name>
        <sequence type="described" ref="VSP_036249"/>
    </isoform>
    <isoform>
        <id>Q9LR97-4</id>
        <name>4</name>
        <sequence type="described" ref="VSP_036252 VSP_036253"/>
    </isoform>
    <isoform>
        <id>Q9LR97-5</id>
        <name>5</name>
        <sequence type="described" ref="VSP_036250 VSP_036251"/>
    </isoform>
</comment>
<comment type="similarity">
    <text evidence="3">Belongs to the UPF0725 (EMB2204) family.</text>
</comment>
<comment type="sequence caution" evidence="3">
    <conflict type="miscellaneous discrepancy">
        <sequence resource="EMBL" id="BX813888"/>
    </conflict>
    <text>Sequencing errors.</text>
</comment>
<comment type="sequence caution" evidence="3">
    <conflict type="miscellaneous discrepancy">
        <sequence resource="EMBL" id="BX815042"/>
    </conflict>
    <text>Sequencing errors.</text>
</comment>
<comment type="sequence caution" evidence="3">
    <conflict type="miscellaneous discrepancy">
        <sequence resource="EMBL" id="BX816706"/>
    </conflict>
    <text>Sequencing errors.</text>
</comment>
<reference key="1">
    <citation type="journal article" date="2000" name="Nature">
        <title>Sequence and analysis of chromosome 1 of the plant Arabidopsis thaliana.</title>
        <authorList>
            <person name="Theologis A."/>
            <person name="Ecker J.R."/>
            <person name="Palm C.J."/>
            <person name="Federspiel N.A."/>
            <person name="Kaul S."/>
            <person name="White O."/>
            <person name="Alonso J."/>
            <person name="Altafi H."/>
            <person name="Araujo R."/>
            <person name="Bowman C.L."/>
            <person name="Brooks S.Y."/>
            <person name="Buehler E."/>
            <person name="Chan A."/>
            <person name="Chao Q."/>
            <person name="Chen H."/>
            <person name="Cheuk R.F."/>
            <person name="Chin C.W."/>
            <person name="Chung M.K."/>
            <person name="Conn L."/>
            <person name="Conway A.B."/>
            <person name="Conway A.R."/>
            <person name="Creasy T.H."/>
            <person name="Dewar K."/>
            <person name="Dunn P."/>
            <person name="Etgu P."/>
            <person name="Feldblyum T.V."/>
            <person name="Feng J.-D."/>
            <person name="Fong B."/>
            <person name="Fujii C.Y."/>
            <person name="Gill J.E."/>
            <person name="Goldsmith A.D."/>
            <person name="Haas B."/>
            <person name="Hansen N.F."/>
            <person name="Hughes B."/>
            <person name="Huizar L."/>
            <person name="Hunter J.L."/>
            <person name="Jenkins J."/>
            <person name="Johnson-Hopson C."/>
            <person name="Khan S."/>
            <person name="Khaykin E."/>
            <person name="Kim C.J."/>
            <person name="Koo H.L."/>
            <person name="Kremenetskaia I."/>
            <person name="Kurtz D.B."/>
            <person name="Kwan A."/>
            <person name="Lam B."/>
            <person name="Langin-Hooper S."/>
            <person name="Lee A."/>
            <person name="Lee J.M."/>
            <person name="Lenz C.A."/>
            <person name="Li J.H."/>
            <person name="Li Y.-P."/>
            <person name="Lin X."/>
            <person name="Liu S.X."/>
            <person name="Liu Z.A."/>
            <person name="Luros J.S."/>
            <person name="Maiti R."/>
            <person name="Marziali A."/>
            <person name="Militscher J."/>
            <person name="Miranda M."/>
            <person name="Nguyen M."/>
            <person name="Nierman W.C."/>
            <person name="Osborne B.I."/>
            <person name="Pai G."/>
            <person name="Peterson J."/>
            <person name="Pham P.K."/>
            <person name="Rizzo M."/>
            <person name="Rooney T."/>
            <person name="Rowley D."/>
            <person name="Sakano H."/>
            <person name="Salzberg S.L."/>
            <person name="Schwartz J.R."/>
            <person name="Shinn P."/>
            <person name="Southwick A.M."/>
            <person name="Sun H."/>
            <person name="Tallon L.J."/>
            <person name="Tambunga G."/>
            <person name="Toriumi M.J."/>
            <person name="Town C.D."/>
            <person name="Utterback T."/>
            <person name="Van Aken S."/>
            <person name="Vaysberg M."/>
            <person name="Vysotskaia V.S."/>
            <person name="Walker M."/>
            <person name="Wu D."/>
            <person name="Yu G."/>
            <person name="Fraser C.M."/>
            <person name="Venter J.C."/>
            <person name="Davis R.W."/>
        </authorList>
    </citation>
    <scope>NUCLEOTIDE SEQUENCE [LARGE SCALE GENOMIC DNA]</scope>
    <source>
        <strain>cv. Columbia</strain>
    </source>
</reference>
<reference key="2">
    <citation type="journal article" date="2017" name="Plant J.">
        <title>Araport11: a complete reannotation of the Arabidopsis thaliana reference genome.</title>
        <authorList>
            <person name="Cheng C.Y."/>
            <person name="Krishnakumar V."/>
            <person name="Chan A.P."/>
            <person name="Thibaud-Nissen F."/>
            <person name="Schobel S."/>
            <person name="Town C.D."/>
        </authorList>
    </citation>
    <scope>GENOME REANNOTATION</scope>
    <source>
        <strain>cv. Columbia</strain>
    </source>
</reference>
<reference key="3">
    <citation type="journal article" date="2003" name="Science">
        <title>Empirical analysis of transcriptional activity in the Arabidopsis genome.</title>
        <authorList>
            <person name="Yamada K."/>
            <person name="Lim J."/>
            <person name="Dale J.M."/>
            <person name="Chen H."/>
            <person name="Shinn P."/>
            <person name="Palm C.J."/>
            <person name="Southwick A.M."/>
            <person name="Wu H.C."/>
            <person name="Kim C.J."/>
            <person name="Nguyen M."/>
            <person name="Pham P.K."/>
            <person name="Cheuk R.F."/>
            <person name="Karlin-Newmann G."/>
            <person name="Liu S.X."/>
            <person name="Lam B."/>
            <person name="Sakano H."/>
            <person name="Wu T."/>
            <person name="Yu G."/>
            <person name="Miranda M."/>
            <person name="Quach H.L."/>
            <person name="Tripp M."/>
            <person name="Chang C.H."/>
            <person name="Lee J.M."/>
            <person name="Toriumi M.J."/>
            <person name="Chan M.M."/>
            <person name="Tang C.C."/>
            <person name="Onodera C.S."/>
            <person name="Deng J.M."/>
            <person name="Akiyama K."/>
            <person name="Ansari Y."/>
            <person name="Arakawa T."/>
            <person name="Banh J."/>
            <person name="Banno F."/>
            <person name="Bowser L."/>
            <person name="Brooks S.Y."/>
            <person name="Carninci P."/>
            <person name="Chao Q."/>
            <person name="Choy N."/>
            <person name="Enju A."/>
            <person name="Goldsmith A.D."/>
            <person name="Gurjal M."/>
            <person name="Hansen N.F."/>
            <person name="Hayashizaki Y."/>
            <person name="Johnson-Hopson C."/>
            <person name="Hsuan V.W."/>
            <person name="Iida K."/>
            <person name="Karnes M."/>
            <person name="Khan S."/>
            <person name="Koesema E."/>
            <person name="Ishida J."/>
            <person name="Jiang P.X."/>
            <person name="Jones T."/>
            <person name="Kawai J."/>
            <person name="Kamiya A."/>
            <person name="Meyers C."/>
            <person name="Nakajima M."/>
            <person name="Narusaka M."/>
            <person name="Seki M."/>
            <person name="Sakurai T."/>
            <person name="Satou M."/>
            <person name="Tamse R."/>
            <person name="Vaysberg M."/>
            <person name="Wallender E.K."/>
            <person name="Wong C."/>
            <person name="Yamamura Y."/>
            <person name="Yuan S."/>
            <person name="Shinozaki K."/>
            <person name="Davis R.W."/>
            <person name="Theologis A."/>
            <person name="Ecker J.R."/>
        </authorList>
    </citation>
    <scope>NUCLEOTIDE SEQUENCE [LARGE SCALE MRNA] (ISOFORM 4)</scope>
    <source>
        <strain>cv. Columbia</strain>
    </source>
</reference>
<reference key="4">
    <citation type="journal article" date="2004" name="Genome Res.">
        <title>Whole genome sequence comparisons and 'full-length' cDNA sequences: a combined approach to evaluate and improve Arabidopsis genome annotation.</title>
        <authorList>
            <person name="Castelli V."/>
            <person name="Aury J.-M."/>
            <person name="Jaillon O."/>
            <person name="Wincker P."/>
            <person name="Clepet C."/>
            <person name="Menard M."/>
            <person name="Cruaud C."/>
            <person name="Quetier F."/>
            <person name="Scarpelli C."/>
            <person name="Schaechter V."/>
            <person name="Temple G."/>
            <person name="Caboche M."/>
            <person name="Weissenbach J."/>
            <person name="Salanoubat M."/>
        </authorList>
    </citation>
    <scope>NUCLEOTIDE SEQUENCE [LARGE SCALE MRNA] (ISOFORMS 1 AND 2)</scope>
    <source>
        <strain>cv. Columbia</strain>
        <tissue>Callus</tissue>
        <tissue>Flower bud</tissue>
    </source>
</reference>
<reference key="5">
    <citation type="journal article" date="2012" name="Mol. Cell. Proteomics">
        <title>Comparative large-scale characterisation of plant vs. mammal proteins reveals similar and idiosyncratic N-alpha acetylation features.</title>
        <authorList>
            <person name="Bienvenut W.V."/>
            <person name="Sumpton D."/>
            <person name="Martinez A."/>
            <person name="Lilla S."/>
            <person name="Espagne C."/>
            <person name="Meinnel T."/>
            <person name="Giglione C."/>
        </authorList>
    </citation>
    <scope>ACETYLATION [LARGE SCALE ANALYSIS] AT THR-2</scope>
    <scope>CLEAVAGE OF INITIATOR METHIONINE [LARGE SCALE ANALYSIS]</scope>
    <scope>IDENTIFICATION BY MASS SPECTROMETRY [LARGE SCALE ANALYSIS]</scope>
</reference>